<keyword id="KW-0963">Cytoplasm</keyword>
<keyword id="KW-0378">Hydrolase</keyword>
<keyword id="KW-0540">Nuclease</keyword>
<keyword id="KW-0690">Ribosome biogenesis</keyword>
<name>YQGF_RHILO</name>
<dbReference type="EC" id="3.1.-.-" evidence="1"/>
<dbReference type="EMBL" id="BA000012">
    <property type="protein sequence ID" value="BAB48223.1"/>
    <property type="molecule type" value="Genomic_DNA"/>
</dbReference>
<dbReference type="SMR" id="Q98M90"/>
<dbReference type="KEGG" id="mlo:mlr0681"/>
<dbReference type="eggNOG" id="COG0816">
    <property type="taxonomic scope" value="Bacteria"/>
</dbReference>
<dbReference type="HOGENOM" id="CLU_098240_1_1_5"/>
<dbReference type="Proteomes" id="UP000000552">
    <property type="component" value="Chromosome"/>
</dbReference>
<dbReference type="GO" id="GO:0005829">
    <property type="term" value="C:cytosol"/>
    <property type="evidence" value="ECO:0007669"/>
    <property type="project" value="TreeGrafter"/>
</dbReference>
<dbReference type="GO" id="GO:0004518">
    <property type="term" value="F:nuclease activity"/>
    <property type="evidence" value="ECO:0007669"/>
    <property type="project" value="UniProtKB-KW"/>
</dbReference>
<dbReference type="GO" id="GO:0000967">
    <property type="term" value="P:rRNA 5'-end processing"/>
    <property type="evidence" value="ECO:0007669"/>
    <property type="project" value="UniProtKB-UniRule"/>
</dbReference>
<dbReference type="CDD" id="cd16964">
    <property type="entry name" value="YqgF"/>
    <property type="match status" value="1"/>
</dbReference>
<dbReference type="Gene3D" id="3.30.420.140">
    <property type="entry name" value="YqgF/RNase H-like domain"/>
    <property type="match status" value="1"/>
</dbReference>
<dbReference type="HAMAP" id="MF_00651">
    <property type="entry name" value="Nuclease_YqgF"/>
    <property type="match status" value="1"/>
</dbReference>
<dbReference type="InterPro" id="IPR012337">
    <property type="entry name" value="RNaseH-like_sf"/>
</dbReference>
<dbReference type="InterPro" id="IPR005227">
    <property type="entry name" value="YqgF"/>
</dbReference>
<dbReference type="InterPro" id="IPR006641">
    <property type="entry name" value="YqgF/RNaseH-like_dom"/>
</dbReference>
<dbReference type="InterPro" id="IPR037027">
    <property type="entry name" value="YqgF/RNaseH-like_dom_sf"/>
</dbReference>
<dbReference type="NCBIfam" id="TIGR00250">
    <property type="entry name" value="RNAse_H_YqgF"/>
    <property type="match status" value="1"/>
</dbReference>
<dbReference type="PANTHER" id="PTHR33317">
    <property type="entry name" value="POLYNUCLEOTIDYL TRANSFERASE, RIBONUCLEASE H-LIKE SUPERFAMILY PROTEIN"/>
    <property type="match status" value="1"/>
</dbReference>
<dbReference type="PANTHER" id="PTHR33317:SF4">
    <property type="entry name" value="POLYNUCLEOTIDYL TRANSFERASE, RIBONUCLEASE H-LIKE SUPERFAMILY PROTEIN"/>
    <property type="match status" value="1"/>
</dbReference>
<dbReference type="Pfam" id="PF03652">
    <property type="entry name" value="RuvX"/>
    <property type="match status" value="1"/>
</dbReference>
<dbReference type="SMART" id="SM00732">
    <property type="entry name" value="YqgFc"/>
    <property type="match status" value="1"/>
</dbReference>
<dbReference type="SUPFAM" id="SSF53098">
    <property type="entry name" value="Ribonuclease H-like"/>
    <property type="match status" value="1"/>
</dbReference>
<gene>
    <name type="ordered locus">mlr0681</name>
</gene>
<sequence length="166" mass="17791">MPAWLADGRTLAGLDLGDKTIGVAVSDRGFAFAHPRPVIMRRKFSLDAAVLLALLKKENVGAVAIGLPINMDGSEGPRAQKSRAFVRNMAQLSDLPFVFWDERLSTVAAERTLIEMDFSRAKRAGKIDSAAAAFILQGVLDRLQSLDSAARTELGGRTEPGPTDAA</sequence>
<evidence type="ECO:0000255" key="1">
    <source>
        <dbReference type="HAMAP-Rule" id="MF_00651"/>
    </source>
</evidence>
<reference key="1">
    <citation type="journal article" date="2000" name="DNA Res.">
        <title>Complete genome structure of the nitrogen-fixing symbiotic bacterium Mesorhizobium loti.</title>
        <authorList>
            <person name="Kaneko T."/>
            <person name="Nakamura Y."/>
            <person name="Sato S."/>
            <person name="Asamizu E."/>
            <person name="Kato T."/>
            <person name="Sasamoto S."/>
            <person name="Watanabe A."/>
            <person name="Idesawa K."/>
            <person name="Ishikawa A."/>
            <person name="Kawashima K."/>
            <person name="Kimura T."/>
            <person name="Kishida Y."/>
            <person name="Kiyokawa C."/>
            <person name="Kohara M."/>
            <person name="Matsumoto M."/>
            <person name="Matsuno A."/>
            <person name="Mochizuki Y."/>
            <person name="Nakayama S."/>
            <person name="Nakazaki N."/>
            <person name="Shimpo S."/>
            <person name="Sugimoto M."/>
            <person name="Takeuchi C."/>
            <person name="Yamada M."/>
            <person name="Tabata S."/>
        </authorList>
    </citation>
    <scope>NUCLEOTIDE SEQUENCE [LARGE SCALE GENOMIC DNA]</scope>
    <source>
        <strain>LMG 29417 / CECT 9101 / MAFF 303099</strain>
    </source>
</reference>
<proteinExistence type="inferred from homology"/>
<accession>Q98M90</accession>
<protein>
    <recommendedName>
        <fullName evidence="1">Putative pre-16S rRNA nuclease</fullName>
        <ecNumber evidence="1">3.1.-.-</ecNumber>
    </recommendedName>
</protein>
<organism>
    <name type="scientific">Mesorhizobium japonicum (strain LMG 29417 / CECT 9101 / MAFF 303099)</name>
    <name type="common">Mesorhizobium loti (strain MAFF 303099)</name>
    <dbReference type="NCBI Taxonomy" id="266835"/>
    <lineage>
        <taxon>Bacteria</taxon>
        <taxon>Pseudomonadati</taxon>
        <taxon>Pseudomonadota</taxon>
        <taxon>Alphaproteobacteria</taxon>
        <taxon>Hyphomicrobiales</taxon>
        <taxon>Phyllobacteriaceae</taxon>
        <taxon>Mesorhizobium</taxon>
    </lineage>
</organism>
<comment type="function">
    <text evidence="1">Could be a nuclease involved in processing of the 5'-end of pre-16S rRNA.</text>
</comment>
<comment type="subcellular location">
    <subcellularLocation>
        <location evidence="1">Cytoplasm</location>
    </subcellularLocation>
</comment>
<comment type="similarity">
    <text evidence="1">Belongs to the YqgF nuclease family.</text>
</comment>
<feature type="chain" id="PRO_0000172123" description="Putative pre-16S rRNA nuclease">
    <location>
        <begin position="1"/>
        <end position="166"/>
    </location>
</feature>